<proteinExistence type="inferred from homology"/>
<protein>
    <recommendedName>
        <fullName evidence="1">DNA-directed RNA polymerase subunit beta</fullName>
        <shortName evidence="1">RNAP subunit beta</shortName>
        <ecNumber evidence="1">2.7.7.6</ecNumber>
    </recommendedName>
    <alternativeName>
        <fullName evidence="1">RNA polymerase subunit beta</fullName>
    </alternativeName>
    <alternativeName>
        <fullName evidence="1">Transcriptase subunit beta</fullName>
    </alternativeName>
</protein>
<feature type="chain" id="PRO_0000047867" description="DNA-directed RNA polymerase subunit beta">
    <location>
        <begin position="1"/>
        <end position="1370"/>
    </location>
</feature>
<gene>
    <name evidence="1" type="primary">rpoB</name>
    <name type="ordered locus">BP0015</name>
</gene>
<evidence type="ECO:0000255" key="1">
    <source>
        <dbReference type="HAMAP-Rule" id="MF_01321"/>
    </source>
</evidence>
<organism>
    <name type="scientific">Bordetella pertussis (strain Tohama I / ATCC BAA-589 / NCTC 13251)</name>
    <dbReference type="NCBI Taxonomy" id="257313"/>
    <lineage>
        <taxon>Bacteria</taxon>
        <taxon>Pseudomonadati</taxon>
        <taxon>Pseudomonadota</taxon>
        <taxon>Betaproteobacteria</taxon>
        <taxon>Burkholderiales</taxon>
        <taxon>Alcaligenaceae</taxon>
        <taxon>Bordetella</taxon>
    </lineage>
</organism>
<dbReference type="EC" id="2.7.7.6" evidence="1"/>
<dbReference type="EMBL" id="BX640411">
    <property type="protein sequence ID" value="CAE40394.1"/>
    <property type="molecule type" value="Genomic_DNA"/>
</dbReference>
<dbReference type="RefSeq" id="NP_878932.1">
    <property type="nucleotide sequence ID" value="NC_002929.2"/>
</dbReference>
<dbReference type="RefSeq" id="WP_010929573.1">
    <property type="nucleotide sequence ID" value="NZ_CP039022.1"/>
</dbReference>
<dbReference type="SMR" id="Q7W0R9"/>
<dbReference type="STRING" id="257313.BP0015"/>
<dbReference type="PaxDb" id="257313-BP0015"/>
<dbReference type="GeneID" id="69599921"/>
<dbReference type="KEGG" id="bpe:BP0015"/>
<dbReference type="PATRIC" id="fig|257313.5.peg.15"/>
<dbReference type="eggNOG" id="COG0085">
    <property type="taxonomic scope" value="Bacteria"/>
</dbReference>
<dbReference type="HOGENOM" id="CLU_000524_4_0_4"/>
<dbReference type="Proteomes" id="UP000002676">
    <property type="component" value="Chromosome"/>
</dbReference>
<dbReference type="GO" id="GO:0000428">
    <property type="term" value="C:DNA-directed RNA polymerase complex"/>
    <property type="evidence" value="ECO:0007669"/>
    <property type="project" value="UniProtKB-KW"/>
</dbReference>
<dbReference type="GO" id="GO:0003677">
    <property type="term" value="F:DNA binding"/>
    <property type="evidence" value="ECO:0007669"/>
    <property type="project" value="UniProtKB-UniRule"/>
</dbReference>
<dbReference type="GO" id="GO:0003899">
    <property type="term" value="F:DNA-directed RNA polymerase activity"/>
    <property type="evidence" value="ECO:0007669"/>
    <property type="project" value="UniProtKB-UniRule"/>
</dbReference>
<dbReference type="GO" id="GO:0032549">
    <property type="term" value="F:ribonucleoside binding"/>
    <property type="evidence" value="ECO:0007669"/>
    <property type="project" value="InterPro"/>
</dbReference>
<dbReference type="GO" id="GO:0006351">
    <property type="term" value="P:DNA-templated transcription"/>
    <property type="evidence" value="ECO:0007669"/>
    <property type="project" value="UniProtKB-UniRule"/>
</dbReference>
<dbReference type="CDD" id="cd00653">
    <property type="entry name" value="RNA_pol_B_RPB2"/>
    <property type="match status" value="1"/>
</dbReference>
<dbReference type="FunFam" id="2.40.50.100:FF:000006">
    <property type="entry name" value="DNA-directed RNA polymerase subunit beta"/>
    <property type="match status" value="1"/>
</dbReference>
<dbReference type="FunFam" id="3.90.1800.10:FF:000001">
    <property type="entry name" value="DNA-directed RNA polymerase subunit beta"/>
    <property type="match status" value="1"/>
</dbReference>
<dbReference type="Gene3D" id="2.40.50.100">
    <property type="match status" value="1"/>
</dbReference>
<dbReference type="Gene3D" id="2.40.50.150">
    <property type="match status" value="1"/>
</dbReference>
<dbReference type="Gene3D" id="3.90.1100.10">
    <property type="match status" value="2"/>
</dbReference>
<dbReference type="Gene3D" id="2.30.150.10">
    <property type="entry name" value="DNA-directed RNA polymerase, beta subunit, external 1 domain"/>
    <property type="match status" value="1"/>
</dbReference>
<dbReference type="Gene3D" id="2.40.270.10">
    <property type="entry name" value="DNA-directed RNA polymerase, subunit 2, domain 6"/>
    <property type="match status" value="2"/>
</dbReference>
<dbReference type="Gene3D" id="3.90.1800.10">
    <property type="entry name" value="RNA polymerase alpha subunit dimerisation domain"/>
    <property type="match status" value="1"/>
</dbReference>
<dbReference type="Gene3D" id="3.90.1110.10">
    <property type="entry name" value="RNA polymerase Rpb2, domain 2"/>
    <property type="match status" value="2"/>
</dbReference>
<dbReference type="HAMAP" id="MF_01321">
    <property type="entry name" value="RNApol_bact_RpoB"/>
    <property type="match status" value="1"/>
</dbReference>
<dbReference type="InterPro" id="IPR042107">
    <property type="entry name" value="DNA-dir_RNA_pol_bsu_ext_1_sf"/>
</dbReference>
<dbReference type="InterPro" id="IPR019462">
    <property type="entry name" value="DNA-dir_RNA_pol_bsu_external_1"/>
</dbReference>
<dbReference type="InterPro" id="IPR015712">
    <property type="entry name" value="DNA-dir_RNA_pol_su2"/>
</dbReference>
<dbReference type="InterPro" id="IPR007120">
    <property type="entry name" value="DNA-dir_RNAP_su2_dom"/>
</dbReference>
<dbReference type="InterPro" id="IPR037033">
    <property type="entry name" value="DNA-dir_RNAP_su2_hyb_sf"/>
</dbReference>
<dbReference type="InterPro" id="IPR010243">
    <property type="entry name" value="RNA_pol_bsu_bac"/>
</dbReference>
<dbReference type="InterPro" id="IPR007121">
    <property type="entry name" value="RNA_pol_bsu_CS"/>
</dbReference>
<dbReference type="InterPro" id="IPR007644">
    <property type="entry name" value="RNA_pol_bsu_protrusion"/>
</dbReference>
<dbReference type="InterPro" id="IPR007642">
    <property type="entry name" value="RNA_pol_Rpb2_2"/>
</dbReference>
<dbReference type="InterPro" id="IPR037034">
    <property type="entry name" value="RNA_pol_Rpb2_2_sf"/>
</dbReference>
<dbReference type="InterPro" id="IPR007645">
    <property type="entry name" value="RNA_pol_Rpb2_3"/>
</dbReference>
<dbReference type="InterPro" id="IPR007641">
    <property type="entry name" value="RNA_pol_Rpb2_7"/>
</dbReference>
<dbReference type="InterPro" id="IPR014724">
    <property type="entry name" value="RNA_pol_RPB2_OB-fold"/>
</dbReference>
<dbReference type="NCBIfam" id="NF001616">
    <property type="entry name" value="PRK00405.1"/>
    <property type="match status" value="1"/>
</dbReference>
<dbReference type="NCBIfam" id="TIGR02013">
    <property type="entry name" value="rpoB"/>
    <property type="match status" value="1"/>
</dbReference>
<dbReference type="PANTHER" id="PTHR20856">
    <property type="entry name" value="DNA-DIRECTED RNA POLYMERASE I SUBUNIT 2"/>
    <property type="match status" value="1"/>
</dbReference>
<dbReference type="Pfam" id="PF04563">
    <property type="entry name" value="RNA_pol_Rpb2_1"/>
    <property type="match status" value="1"/>
</dbReference>
<dbReference type="Pfam" id="PF04561">
    <property type="entry name" value="RNA_pol_Rpb2_2"/>
    <property type="match status" value="2"/>
</dbReference>
<dbReference type="Pfam" id="PF04565">
    <property type="entry name" value="RNA_pol_Rpb2_3"/>
    <property type="match status" value="1"/>
</dbReference>
<dbReference type="Pfam" id="PF10385">
    <property type="entry name" value="RNA_pol_Rpb2_45"/>
    <property type="match status" value="1"/>
</dbReference>
<dbReference type="Pfam" id="PF00562">
    <property type="entry name" value="RNA_pol_Rpb2_6"/>
    <property type="match status" value="1"/>
</dbReference>
<dbReference type="Pfam" id="PF04560">
    <property type="entry name" value="RNA_pol_Rpb2_7"/>
    <property type="match status" value="1"/>
</dbReference>
<dbReference type="SUPFAM" id="SSF64484">
    <property type="entry name" value="beta and beta-prime subunits of DNA dependent RNA-polymerase"/>
    <property type="match status" value="1"/>
</dbReference>
<dbReference type="PROSITE" id="PS01166">
    <property type="entry name" value="RNA_POL_BETA"/>
    <property type="match status" value="1"/>
</dbReference>
<name>RPOB_BORPE</name>
<accession>Q7W0R9</accession>
<sequence>MPYSYTEKKRIRKSFAKREDVQNVPFLLATQLQSYLTFLQADTATSDRVNEGLQAAFSSIFPIVSHNGMARLEFVSYALGEPVFDVKECQQRGLTYASPLRAKVRLVLLDREVSKPTIKEVKEQEVYMGEIPLMTGTGSFVINGTERVIVSQLHRSPGVFFEHDRGKTHSSGKLLFSARVIPYRGSWLDFEFDPKDVLFFRVDRRRKMPVTILLKAIGMTPESILAHFFDFDNFELKSEGGMMEFVAERWKGEMARFDIADRDGKVIVEKDKRINAKHLRDLAAGGIQRVSVPEDFLYGRVLAKNIVDPDTGEVVAHANDEITESVLNAMRAANVRDIQTLYTNDLDRGPYISQTLRADETADQMAARVAIYRMMRPGEPPTEEAVEALFQRLFYSEETYDLSRVGRMKVNSRLGRGDDSTGPMTLTNEDILETIKVLVELRNGRGQIDDIDHLGNRRVRCVGELAENQFRAGLVRVERAVKERLGQAETENLMPHDLINSKPISAAIKEFFGSSQLSQFMDQTNPLSEITHKRRVSALGPGGLTRERAGFEVRDVHPTHYGRVCPIETPEGPNIGLINSMALYARLNEYGFLETPYRKIIDGKVSDQIDYLSAIEESHYVIAQANAALDDEGRFVDDLVACREAGETMLTAPGNVHYMDVAPSQIVSVAASLIPFLEHDDANRALMGANMQRQAVPCLRPEKPLVGTGVERTVAVDSGTTVQALRGGVVDHVDADRVVIRVNDEENVAGEVGVDIYNLIKYTRSNQNTNINQRPIVARGDKVAKGDVLADGASTDLGELALGQNMLIAFMPWNGYNFEDSILISERVVADDRYTSIHIEELTVVARDTKLGPEEITRDISNLAETQLNRLDDSGIVYIGAEVSADDVLVGKVTPKGETQLTPEEKLLRAIFGEKASDVKDTSLRVPSGMTGTVIDVQVFTREGIVRDKRAQSIIDDELRRYRQDLNDQLRIVENDQFDRIEKMLVGKTVNGGPRKLAKGATLTKAYLADLDRWQWFDIRLADEQHAVVLEQAKESLEQKRHQFDLAFEEKRKKLTQGDELPPGVLKMIKVYLAVKRRLQPGDKMAGRHGNKGVVSRITPVEDMPHMADGTPADIVLNPLGVPSRMNVGQVLEVHLGWAAKGVGYRIADMLRDERTAQAKSVRGYLEKVYNTTGSSAHIDSLTDEEVLELANNLKKGVPFATPVFDGATEEEIGKMLELAYPDDVAARMRLTASRSQAWLYDGRTGEQFERPVTIGYMHYLKLHHLVDDKMHARSTGPYSLVTQQPLGGKAQFGGQRFGEMEVWALEAYGASYTLQEMLTVKSDDITGRTKVYENIVKGDHVIDAGMPESFNVLVKEIRSLALDMDLERN</sequence>
<comment type="function">
    <text evidence="1">DNA-dependent RNA polymerase catalyzes the transcription of DNA into RNA using the four ribonucleoside triphosphates as substrates.</text>
</comment>
<comment type="catalytic activity">
    <reaction evidence="1">
        <text>RNA(n) + a ribonucleoside 5'-triphosphate = RNA(n+1) + diphosphate</text>
        <dbReference type="Rhea" id="RHEA:21248"/>
        <dbReference type="Rhea" id="RHEA-COMP:14527"/>
        <dbReference type="Rhea" id="RHEA-COMP:17342"/>
        <dbReference type="ChEBI" id="CHEBI:33019"/>
        <dbReference type="ChEBI" id="CHEBI:61557"/>
        <dbReference type="ChEBI" id="CHEBI:140395"/>
        <dbReference type="EC" id="2.7.7.6"/>
    </reaction>
</comment>
<comment type="subunit">
    <text evidence="1">The RNAP catalytic core consists of 2 alpha, 1 beta, 1 beta' and 1 omega subunit. When a sigma factor is associated with the core the holoenzyme is formed, which can initiate transcription.</text>
</comment>
<comment type="similarity">
    <text evidence="1">Belongs to the RNA polymerase beta chain family.</text>
</comment>
<reference key="1">
    <citation type="journal article" date="2003" name="Nat. Genet.">
        <title>Comparative analysis of the genome sequences of Bordetella pertussis, Bordetella parapertussis and Bordetella bronchiseptica.</title>
        <authorList>
            <person name="Parkhill J."/>
            <person name="Sebaihia M."/>
            <person name="Preston A."/>
            <person name="Murphy L.D."/>
            <person name="Thomson N.R."/>
            <person name="Harris D.E."/>
            <person name="Holden M.T.G."/>
            <person name="Churcher C.M."/>
            <person name="Bentley S.D."/>
            <person name="Mungall K.L."/>
            <person name="Cerdeno-Tarraga A.-M."/>
            <person name="Temple L."/>
            <person name="James K.D."/>
            <person name="Harris B."/>
            <person name="Quail M.A."/>
            <person name="Achtman M."/>
            <person name="Atkin R."/>
            <person name="Baker S."/>
            <person name="Basham D."/>
            <person name="Bason N."/>
            <person name="Cherevach I."/>
            <person name="Chillingworth T."/>
            <person name="Collins M."/>
            <person name="Cronin A."/>
            <person name="Davis P."/>
            <person name="Doggett J."/>
            <person name="Feltwell T."/>
            <person name="Goble A."/>
            <person name="Hamlin N."/>
            <person name="Hauser H."/>
            <person name="Holroyd S."/>
            <person name="Jagels K."/>
            <person name="Leather S."/>
            <person name="Moule S."/>
            <person name="Norberczak H."/>
            <person name="O'Neil S."/>
            <person name="Ormond D."/>
            <person name="Price C."/>
            <person name="Rabbinowitsch E."/>
            <person name="Rutter S."/>
            <person name="Sanders M."/>
            <person name="Saunders D."/>
            <person name="Seeger K."/>
            <person name="Sharp S."/>
            <person name="Simmonds M."/>
            <person name="Skelton J."/>
            <person name="Squares R."/>
            <person name="Squares S."/>
            <person name="Stevens K."/>
            <person name="Unwin L."/>
            <person name="Whitehead S."/>
            <person name="Barrell B.G."/>
            <person name="Maskell D.J."/>
        </authorList>
    </citation>
    <scope>NUCLEOTIDE SEQUENCE [LARGE SCALE GENOMIC DNA]</scope>
    <source>
        <strain>Tohama I / ATCC BAA-589 / NCTC 13251</strain>
    </source>
</reference>
<keyword id="KW-0240">DNA-directed RNA polymerase</keyword>
<keyword id="KW-0548">Nucleotidyltransferase</keyword>
<keyword id="KW-1185">Reference proteome</keyword>
<keyword id="KW-0804">Transcription</keyword>
<keyword id="KW-0808">Transferase</keyword>